<reference key="1">
    <citation type="submission" date="2002-04" db="EMBL/GenBank/DDBJ databases">
        <title>IAN-6, a novel member of IAN family of GTP/GDP-binding proteins is involved in thymocyte maturation.</title>
        <authorList>
            <person name="Miazek A."/>
            <person name="Malissen B."/>
        </authorList>
    </citation>
    <scope>NUCLEOTIDE SEQUENCE [MRNA]</scope>
    <source>
        <strain>C57BL/6J</strain>
    </source>
</reference>
<reference key="2">
    <citation type="journal article" date="2004" name="DNA Res.">
        <title>Prediction of the coding sequences of mouse homologues of FLJ genes: the complete nucleotide sequences of 110 mouse FLJ-homologous cDNAs identified by screening of terminal sequences of cDNA clones randomly sampled from size-fractionated libraries.</title>
        <authorList>
            <person name="Okazaki N."/>
            <person name="Kikuno R."/>
            <person name="Ohara R."/>
            <person name="Inamoto S."/>
            <person name="Koseki H."/>
            <person name="Hiraoka S."/>
            <person name="Saga Y."/>
            <person name="Kitamura H."/>
            <person name="Nakagawa T."/>
            <person name="Nagase T."/>
            <person name="Ohara O."/>
            <person name="Koga H."/>
        </authorList>
    </citation>
    <scope>NUCLEOTIDE SEQUENCE [LARGE SCALE MRNA]</scope>
</reference>
<reference key="3">
    <citation type="journal article" date="2005" name="Science">
        <title>The transcriptional landscape of the mammalian genome.</title>
        <authorList>
            <person name="Carninci P."/>
            <person name="Kasukawa T."/>
            <person name="Katayama S."/>
            <person name="Gough J."/>
            <person name="Frith M.C."/>
            <person name="Maeda N."/>
            <person name="Oyama R."/>
            <person name="Ravasi T."/>
            <person name="Lenhard B."/>
            <person name="Wells C."/>
            <person name="Kodzius R."/>
            <person name="Shimokawa K."/>
            <person name="Bajic V.B."/>
            <person name="Brenner S.E."/>
            <person name="Batalov S."/>
            <person name="Forrest A.R."/>
            <person name="Zavolan M."/>
            <person name="Davis M.J."/>
            <person name="Wilming L.G."/>
            <person name="Aidinis V."/>
            <person name="Allen J.E."/>
            <person name="Ambesi-Impiombato A."/>
            <person name="Apweiler R."/>
            <person name="Aturaliya R.N."/>
            <person name="Bailey T.L."/>
            <person name="Bansal M."/>
            <person name="Baxter L."/>
            <person name="Beisel K.W."/>
            <person name="Bersano T."/>
            <person name="Bono H."/>
            <person name="Chalk A.M."/>
            <person name="Chiu K.P."/>
            <person name="Choudhary V."/>
            <person name="Christoffels A."/>
            <person name="Clutterbuck D.R."/>
            <person name="Crowe M.L."/>
            <person name="Dalla E."/>
            <person name="Dalrymple B.P."/>
            <person name="de Bono B."/>
            <person name="Della Gatta G."/>
            <person name="di Bernardo D."/>
            <person name="Down T."/>
            <person name="Engstrom P."/>
            <person name="Fagiolini M."/>
            <person name="Faulkner G."/>
            <person name="Fletcher C.F."/>
            <person name="Fukushima T."/>
            <person name="Furuno M."/>
            <person name="Futaki S."/>
            <person name="Gariboldi M."/>
            <person name="Georgii-Hemming P."/>
            <person name="Gingeras T.R."/>
            <person name="Gojobori T."/>
            <person name="Green R.E."/>
            <person name="Gustincich S."/>
            <person name="Harbers M."/>
            <person name="Hayashi Y."/>
            <person name="Hensch T.K."/>
            <person name="Hirokawa N."/>
            <person name="Hill D."/>
            <person name="Huminiecki L."/>
            <person name="Iacono M."/>
            <person name="Ikeo K."/>
            <person name="Iwama A."/>
            <person name="Ishikawa T."/>
            <person name="Jakt M."/>
            <person name="Kanapin A."/>
            <person name="Katoh M."/>
            <person name="Kawasawa Y."/>
            <person name="Kelso J."/>
            <person name="Kitamura H."/>
            <person name="Kitano H."/>
            <person name="Kollias G."/>
            <person name="Krishnan S.P."/>
            <person name="Kruger A."/>
            <person name="Kummerfeld S.K."/>
            <person name="Kurochkin I.V."/>
            <person name="Lareau L.F."/>
            <person name="Lazarevic D."/>
            <person name="Lipovich L."/>
            <person name="Liu J."/>
            <person name="Liuni S."/>
            <person name="McWilliam S."/>
            <person name="Madan Babu M."/>
            <person name="Madera M."/>
            <person name="Marchionni L."/>
            <person name="Matsuda H."/>
            <person name="Matsuzawa S."/>
            <person name="Miki H."/>
            <person name="Mignone F."/>
            <person name="Miyake S."/>
            <person name="Morris K."/>
            <person name="Mottagui-Tabar S."/>
            <person name="Mulder N."/>
            <person name="Nakano N."/>
            <person name="Nakauchi H."/>
            <person name="Ng P."/>
            <person name="Nilsson R."/>
            <person name="Nishiguchi S."/>
            <person name="Nishikawa S."/>
            <person name="Nori F."/>
            <person name="Ohara O."/>
            <person name="Okazaki Y."/>
            <person name="Orlando V."/>
            <person name="Pang K.C."/>
            <person name="Pavan W.J."/>
            <person name="Pavesi G."/>
            <person name="Pesole G."/>
            <person name="Petrovsky N."/>
            <person name="Piazza S."/>
            <person name="Reed J."/>
            <person name="Reid J.F."/>
            <person name="Ring B.Z."/>
            <person name="Ringwald M."/>
            <person name="Rost B."/>
            <person name="Ruan Y."/>
            <person name="Salzberg S.L."/>
            <person name="Sandelin A."/>
            <person name="Schneider C."/>
            <person name="Schoenbach C."/>
            <person name="Sekiguchi K."/>
            <person name="Semple C.A."/>
            <person name="Seno S."/>
            <person name="Sessa L."/>
            <person name="Sheng Y."/>
            <person name="Shibata Y."/>
            <person name="Shimada H."/>
            <person name="Shimada K."/>
            <person name="Silva D."/>
            <person name="Sinclair B."/>
            <person name="Sperling S."/>
            <person name="Stupka E."/>
            <person name="Sugiura K."/>
            <person name="Sultana R."/>
            <person name="Takenaka Y."/>
            <person name="Taki K."/>
            <person name="Tammoja K."/>
            <person name="Tan S.L."/>
            <person name="Tang S."/>
            <person name="Taylor M.S."/>
            <person name="Tegner J."/>
            <person name="Teichmann S.A."/>
            <person name="Ueda H.R."/>
            <person name="van Nimwegen E."/>
            <person name="Verardo R."/>
            <person name="Wei C.L."/>
            <person name="Yagi K."/>
            <person name="Yamanishi H."/>
            <person name="Zabarovsky E."/>
            <person name="Zhu S."/>
            <person name="Zimmer A."/>
            <person name="Hide W."/>
            <person name="Bult C."/>
            <person name="Grimmond S.M."/>
            <person name="Teasdale R.D."/>
            <person name="Liu E.T."/>
            <person name="Brusic V."/>
            <person name="Quackenbush J."/>
            <person name="Wahlestedt C."/>
            <person name="Mattick J.S."/>
            <person name="Hume D.A."/>
            <person name="Kai C."/>
            <person name="Sasaki D."/>
            <person name="Tomaru Y."/>
            <person name="Fukuda S."/>
            <person name="Kanamori-Katayama M."/>
            <person name="Suzuki M."/>
            <person name="Aoki J."/>
            <person name="Arakawa T."/>
            <person name="Iida J."/>
            <person name="Imamura K."/>
            <person name="Itoh M."/>
            <person name="Kato T."/>
            <person name="Kawaji H."/>
            <person name="Kawagashira N."/>
            <person name="Kawashima T."/>
            <person name="Kojima M."/>
            <person name="Kondo S."/>
            <person name="Konno H."/>
            <person name="Nakano K."/>
            <person name="Ninomiya N."/>
            <person name="Nishio T."/>
            <person name="Okada M."/>
            <person name="Plessy C."/>
            <person name="Shibata K."/>
            <person name="Shiraki T."/>
            <person name="Suzuki S."/>
            <person name="Tagami M."/>
            <person name="Waki K."/>
            <person name="Watahiki A."/>
            <person name="Okamura-Oho Y."/>
            <person name="Suzuki H."/>
            <person name="Kawai J."/>
            <person name="Hayashizaki Y."/>
        </authorList>
    </citation>
    <scope>NUCLEOTIDE SEQUENCE [LARGE SCALE MRNA]</scope>
    <source>
        <strain>C57BL/6J</strain>
        <tissue>Head</tissue>
    </source>
</reference>
<reference key="4">
    <citation type="journal article" date="2004" name="Genome Res.">
        <title>The status, quality, and expansion of the NIH full-length cDNA project: the Mammalian Gene Collection (MGC).</title>
        <authorList>
            <consortium name="The MGC Project Team"/>
        </authorList>
    </citation>
    <scope>NUCLEOTIDE SEQUENCE [LARGE SCALE MRNA]</scope>
    <source>
        <strain>C57BL/6J</strain>
        <tissue>Mammary gland</tissue>
    </source>
</reference>
<reference key="5">
    <citation type="journal article" date="2006" name="PLoS Biol.">
        <title>IAN family critically regulates survival and development of T lymphocytes.</title>
        <authorList>
            <person name="Nitta T."/>
            <person name="Nasreen M."/>
            <person name="Seike T."/>
            <person name="Goji A."/>
            <person name="Ohigashi I."/>
            <person name="Miyazaki T."/>
            <person name="Ohta T."/>
            <person name="Kanno M."/>
            <person name="Takahama Y."/>
        </authorList>
    </citation>
    <scope>TISSUE SPECIFICITY</scope>
</reference>
<feature type="chain" id="PRO_0000333012" description="GTPase IMAP family member 6">
    <location>
        <begin position="1"/>
        <end position="305"/>
    </location>
</feature>
<feature type="domain" description="AIG1-type G" evidence="4">
    <location>
        <begin position="101"/>
        <end position="302"/>
    </location>
</feature>
<feature type="region of interest" description="Disordered" evidence="5">
    <location>
        <begin position="37"/>
        <end position="91"/>
    </location>
</feature>
<feature type="region of interest" description="G1" evidence="4">
    <location>
        <begin position="110"/>
        <end position="117"/>
    </location>
</feature>
<feature type="region of interest" description="G2" evidence="4">
    <location>
        <begin position="137"/>
        <end position="141"/>
    </location>
</feature>
<feature type="region of interest" description="G3" evidence="4">
    <location>
        <begin position="158"/>
        <end position="161"/>
    </location>
</feature>
<feature type="region of interest" description="G4" evidence="4">
    <location>
        <begin position="225"/>
        <end position="228"/>
    </location>
</feature>
<feature type="region of interest" description="G5" evidence="4">
    <location>
        <begin position="262"/>
        <end position="264"/>
    </location>
</feature>
<feature type="binding site" evidence="2">
    <location>
        <begin position="110"/>
        <end position="118"/>
    </location>
    <ligand>
        <name>GTP</name>
        <dbReference type="ChEBI" id="CHEBI:37565"/>
    </ligand>
</feature>
<feature type="binding site" evidence="3">
    <location>
        <position position="131"/>
    </location>
    <ligand>
        <name>GTP</name>
        <dbReference type="ChEBI" id="CHEBI:37565"/>
    </ligand>
</feature>
<feature type="binding site" evidence="2">
    <location>
        <begin position="226"/>
        <end position="228"/>
    </location>
    <ligand>
        <name>GTP</name>
        <dbReference type="ChEBI" id="CHEBI:37565"/>
    </ligand>
</feature>
<feature type="binding site" evidence="2">
    <location>
        <position position="263"/>
    </location>
    <ligand>
        <name>GTP</name>
        <dbReference type="ChEBI" id="CHEBI:37565"/>
    </ligand>
</feature>
<feature type="sequence conflict" description="In Ref. 1; AAN03835." evidence="8" ref="1">
    <original>T</original>
    <variation>S</variation>
    <location>
        <position position="172"/>
    </location>
</feature>
<feature type="sequence conflict" description="In Ref. 1; AAN03835." evidence="8" ref="1">
    <original>S</original>
    <variation>P</variation>
    <location>
        <position position="182"/>
    </location>
</feature>
<accession>Q8K349</accession>
<accession>Q5DU66</accession>
<accession>Q8K434</accession>
<evidence type="ECO:0000250" key="1">
    <source>
        <dbReference type="UniProtKB" id="Q6P9H5"/>
    </source>
</evidence>
<evidence type="ECO:0000250" key="2">
    <source>
        <dbReference type="UniProtKB" id="Q8WWP7"/>
    </source>
</evidence>
<evidence type="ECO:0000250" key="3">
    <source>
        <dbReference type="UniProtKB" id="Q9UG22"/>
    </source>
</evidence>
<evidence type="ECO:0000255" key="4">
    <source>
        <dbReference type="PROSITE-ProRule" id="PRU01057"/>
    </source>
</evidence>
<evidence type="ECO:0000256" key="5">
    <source>
        <dbReference type="SAM" id="MobiDB-lite"/>
    </source>
</evidence>
<evidence type="ECO:0000269" key="6">
    <source>
    </source>
</evidence>
<evidence type="ECO:0000303" key="7">
    <source>
    </source>
</evidence>
<evidence type="ECO:0000305" key="8"/>
<organism>
    <name type="scientific">Mus musculus</name>
    <name type="common">Mouse</name>
    <dbReference type="NCBI Taxonomy" id="10090"/>
    <lineage>
        <taxon>Eukaryota</taxon>
        <taxon>Metazoa</taxon>
        <taxon>Chordata</taxon>
        <taxon>Craniata</taxon>
        <taxon>Vertebrata</taxon>
        <taxon>Euteleostomi</taxon>
        <taxon>Mammalia</taxon>
        <taxon>Eutheria</taxon>
        <taxon>Euarchontoglires</taxon>
        <taxon>Glires</taxon>
        <taxon>Rodentia</taxon>
        <taxon>Myomorpha</taxon>
        <taxon>Muroidea</taxon>
        <taxon>Muridae</taxon>
        <taxon>Murinae</taxon>
        <taxon>Mus</taxon>
        <taxon>Mus</taxon>
    </lineage>
</organism>
<keyword id="KW-0963">Cytoplasm</keyword>
<keyword id="KW-0342">GTP-binding</keyword>
<keyword id="KW-0547">Nucleotide-binding</keyword>
<keyword id="KW-1185">Reference proteome</keyword>
<gene>
    <name type="primary">Gimap6</name>
    <name evidence="7" type="synonym">Ian6</name>
</gene>
<comment type="subcellular location">
    <subcellularLocation>
        <location evidence="1">Cytoplasm</location>
        <location evidence="1">Cytosol</location>
    </subcellularLocation>
</comment>
<comment type="tissue specificity">
    <text evidence="6">Expressed in thymus (in thymocytes), spleen (in splenocytes), lymph node and lung.</text>
</comment>
<comment type="similarity">
    <text evidence="8">Belongs to the TRAFAC class TrmE-Era-EngA-EngB-Septin-like GTPase superfamily. AIG1/Toc34/Toc159-like paraseptin GTPase family. IAN subfamily.</text>
</comment>
<comment type="sequence caution" evidence="8">
    <conflict type="miscellaneous discrepancy">
        <sequence resource="EMBL-CDS" id="BAD90383"/>
    </conflict>
    <text>The sequence differs from that shown because it seems to be derived from a pre-mRNA.</text>
</comment>
<proteinExistence type="evidence at transcript level"/>
<sequence>MDWLYRKTLGSIGSCSIETFPWPFYSFFQRIYISTPPGKPENSPETSATEVGEQRPSCLSASPVVEEEECEHRPEKNPTRQWPLDSGQGLTKGLKEKKLTPKRLQLLLVGKTGSGKSATGNSILGRQAFESKISARPVTTTFQKGTREFEGKELEVIDTPDIFSPQNQPEATAKKICDLLASPGPHAVLLVIQVGRYTAEDQAVARCLQEIFGNTILAYTILVFTRKEDLAEGSLEEYIQENNNKSLDVLDVACERRHCGFNNKAQGDEQEAQLKKLMEEVELILWENEGHCYTMEFPNVPSKTL</sequence>
<name>GIMA6_MOUSE</name>
<protein>
    <recommendedName>
        <fullName>GTPase IMAP family member 6</fullName>
    </recommendedName>
    <alternativeName>
        <fullName>Immunity-associated nucleotide 6 protein</fullName>
        <shortName>IAN-6</shortName>
        <shortName>mIAN6</shortName>
    </alternativeName>
</protein>
<dbReference type="EMBL" id="AF503921">
    <property type="protein sequence ID" value="AAN03835.1"/>
    <property type="molecule type" value="mRNA"/>
</dbReference>
<dbReference type="EMBL" id="AK220304">
    <property type="protein sequence ID" value="BAD90383.1"/>
    <property type="status" value="ALT_SEQ"/>
    <property type="molecule type" value="Transcribed_RNA"/>
</dbReference>
<dbReference type="EMBL" id="AK160244">
    <property type="protein sequence ID" value="BAE35709.1"/>
    <property type="molecule type" value="mRNA"/>
</dbReference>
<dbReference type="EMBL" id="BC028779">
    <property type="protein sequence ID" value="AAH28779.1"/>
    <property type="molecule type" value="mRNA"/>
</dbReference>
<dbReference type="CCDS" id="CCDS20111.1"/>
<dbReference type="RefSeq" id="NP_694815.1">
    <property type="nucleotide sequence ID" value="NM_153175.3"/>
</dbReference>
<dbReference type="SMR" id="Q8K349"/>
<dbReference type="FunCoup" id="Q8K349">
    <property type="interactions" value="78"/>
</dbReference>
<dbReference type="STRING" id="10090.ENSMUSP00000059371"/>
<dbReference type="PhosphoSitePlus" id="Q8K349"/>
<dbReference type="PaxDb" id="10090-ENSMUSP00000059371"/>
<dbReference type="ProteomicsDB" id="265747"/>
<dbReference type="Antibodypedia" id="18618">
    <property type="antibodies" value="71 antibodies from 15 providers"/>
</dbReference>
<dbReference type="DNASU" id="231931"/>
<dbReference type="Ensembl" id="ENSMUST00000053661.7">
    <property type="protein sequence ID" value="ENSMUSP00000059371.5"/>
    <property type="gene ID" value="ENSMUSG00000047867.12"/>
</dbReference>
<dbReference type="GeneID" id="231931"/>
<dbReference type="KEGG" id="mmu:231931"/>
<dbReference type="UCSC" id="uc009bvm.1">
    <property type="organism name" value="mouse"/>
</dbReference>
<dbReference type="AGR" id="MGI:1918876"/>
<dbReference type="CTD" id="474344"/>
<dbReference type="MGI" id="MGI:1918876">
    <property type="gene designation" value="Gimap6"/>
</dbReference>
<dbReference type="VEuPathDB" id="HostDB:ENSMUSG00000047867"/>
<dbReference type="eggNOG" id="ENOG502R7PE">
    <property type="taxonomic scope" value="Eukaryota"/>
</dbReference>
<dbReference type="GeneTree" id="ENSGT00940000162548"/>
<dbReference type="HOGENOM" id="CLU_956336_0_0_1"/>
<dbReference type="InParanoid" id="Q8K349"/>
<dbReference type="OMA" id="WENEGCC"/>
<dbReference type="OrthoDB" id="8954335at2759"/>
<dbReference type="PhylomeDB" id="Q8K349"/>
<dbReference type="TreeFam" id="TF330845"/>
<dbReference type="BioGRID-ORCS" id="231931">
    <property type="hits" value="2 hits in 76 CRISPR screens"/>
</dbReference>
<dbReference type="PRO" id="PR:Q8K349"/>
<dbReference type="Proteomes" id="UP000000589">
    <property type="component" value="Chromosome 6"/>
</dbReference>
<dbReference type="RNAct" id="Q8K349">
    <property type="molecule type" value="protein"/>
</dbReference>
<dbReference type="Bgee" id="ENSMUSG00000047867">
    <property type="expression patterns" value="Expressed in interventricular septum and 159 other cell types or tissues"/>
</dbReference>
<dbReference type="ExpressionAtlas" id="Q8K349">
    <property type="expression patterns" value="baseline and differential"/>
</dbReference>
<dbReference type="GO" id="GO:0005829">
    <property type="term" value="C:cytosol"/>
    <property type="evidence" value="ECO:0000250"/>
    <property type="project" value="UniProtKB"/>
</dbReference>
<dbReference type="GO" id="GO:0005525">
    <property type="term" value="F:GTP binding"/>
    <property type="evidence" value="ECO:0007669"/>
    <property type="project" value="UniProtKB-KW"/>
</dbReference>
<dbReference type="GO" id="GO:0006914">
    <property type="term" value="P:autophagy"/>
    <property type="evidence" value="ECO:0000315"/>
    <property type="project" value="MGI"/>
</dbReference>
<dbReference type="GO" id="GO:0045454">
    <property type="term" value="P:cell redox homeostasis"/>
    <property type="evidence" value="ECO:0000315"/>
    <property type="project" value="MGI"/>
</dbReference>
<dbReference type="GO" id="GO:0042742">
    <property type="term" value="P:defense response to bacterium"/>
    <property type="evidence" value="ECO:0000315"/>
    <property type="project" value="MGI"/>
</dbReference>
<dbReference type="GO" id="GO:0006955">
    <property type="term" value="P:immune response"/>
    <property type="evidence" value="ECO:0000315"/>
    <property type="project" value="MGI"/>
</dbReference>
<dbReference type="GO" id="GO:0001822">
    <property type="term" value="P:kidney development"/>
    <property type="evidence" value="ECO:0000315"/>
    <property type="project" value="MGI"/>
</dbReference>
<dbReference type="GO" id="GO:0006629">
    <property type="term" value="P:lipid metabolic process"/>
    <property type="evidence" value="ECO:0000315"/>
    <property type="project" value="MGI"/>
</dbReference>
<dbReference type="GO" id="GO:0034341">
    <property type="term" value="P:response to type II interferon"/>
    <property type="evidence" value="ECO:0000315"/>
    <property type="project" value="MGI"/>
</dbReference>
<dbReference type="CDD" id="cd01852">
    <property type="entry name" value="AIG1"/>
    <property type="match status" value="1"/>
</dbReference>
<dbReference type="FunFam" id="3.40.50.300:FF:000366">
    <property type="entry name" value="GTPase, IMAP family member 2"/>
    <property type="match status" value="1"/>
</dbReference>
<dbReference type="Gene3D" id="3.40.50.300">
    <property type="entry name" value="P-loop containing nucleotide triphosphate hydrolases"/>
    <property type="match status" value="1"/>
</dbReference>
<dbReference type="InterPro" id="IPR006703">
    <property type="entry name" value="G_AIG1"/>
</dbReference>
<dbReference type="InterPro" id="IPR045058">
    <property type="entry name" value="GIMA/IAN/Toc"/>
</dbReference>
<dbReference type="InterPro" id="IPR027417">
    <property type="entry name" value="P-loop_NTPase"/>
</dbReference>
<dbReference type="PANTHER" id="PTHR10903:SF144">
    <property type="entry name" value="GTPASE IMAP FAMILY MEMBER 6"/>
    <property type="match status" value="1"/>
</dbReference>
<dbReference type="PANTHER" id="PTHR10903">
    <property type="entry name" value="GTPASE, IMAP FAMILY MEMBER-RELATED"/>
    <property type="match status" value="1"/>
</dbReference>
<dbReference type="Pfam" id="PF04548">
    <property type="entry name" value="AIG1"/>
    <property type="match status" value="1"/>
</dbReference>
<dbReference type="SUPFAM" id="SSF52540">
    <property type="entry name" value="P-loop containing nucleoside triphosphate hydrolases"/>
    <property type="match status" value="1"/>
</dbReference>
<dbReference type="PROSITE" id="PS51720">
    <property type="entry name" value="G_AIG1"/>
    <property type="match status" value="1"/>
</dbReference>